<organism>
    <name type="scientific">Tolumonas auensis (strain DSM 9187 / NBRC 110442 / TA 4)</name>
    <dbReference type="NCBI Taxonomy" id="595494"/>
    <lineage>
        <taxon>Bacteria</taxon>
        <taxon>Pseudomonadati</taxon>
        <taxon>Pseudomonadota</taxon>
        <taxon>Gammaproteobacteria</taxon>
        <taxon>Aeromonadales</taxon>
        <taxon>Aeromonadaceae</taxon>
        <taxon>Tolumonas</taxon>
    </lineage>
</organism>
<proteinExistence type="inferred from homology"/>
<gene>
    <name evidence="1" type="primary">nagB</name>
    <name type="ordered locus">Tola_2136</name>
</gene>
<comment type="function">
    <text evidence="1">Catalyzes the reversible isomerization-deamination of glucosamine 6-phosphate (GlcN6P) to form fructose 6-phosphate (Fru6P) and ammonium ion.</text>
</comment>
<comment type="catalytic activity">
    <reaction evidence="1">
        <text>alpha-D-glucosamine 6-phosphate + H2O = beta-D-fructose 6-phosphate + NH4(+)</text>
        <dbReference type="Rhea" id="RHEA:12172"/>
        <dbReference type="ChEBI" id="CHEBI:15377"/>
        <dbReference type="ChEBI" id="CHEBI:28938"/>
        <dbReference type="ChEBI" id="CHEBI:57634"/>
        <dbReference type="ChEBI" id="CHEBI:75989"/>
        <dbReference type="EC" id="3.5.99.6"/>
    </reaction>
</comment>
<comment type="activity regulation">
    <text evidence="1">Allosterically activated by N-acetylglucosamine 6-phosphate (GlcNAc6P).</text>
</comment>
<comment type="pathway">
    <text evidence="1">Amino-sugar metabolism; N-acetylneuraminate degradation; D-fructose 6-phosphate from N-acetylneuraminate: step 5/5.</text>
</comment>
<comment type="subunit">
    <text evidence="1">Homohexamer.</text>
</comment>
<comment type="similarity">
    <text evidence="1">Belongs to the glucosamine/galactosamine-6-phosphate isomerase family. NagB subfamily.</text>
</comment>
<evidence type="ECO:0000255" key="1">
    <source>
        <dbReference type="HAMAP-Rule" id="MF_01241"/>
    </source>
</evidence>
<dbReference type="EC" id="3.5.99.6" evidence="1"/>
<dbReference type="EMBL" id="CP001616">
    <property type="protein sequence ID" value="ACQ93735.1"/>
    <property type="molecule type" value="Genomic_DNA"/>
</dbReference>
<dbReference type="RefSeq" id="WP_015879203.1">
    <property type="nucleotide sequence ID" value="NC_012691.1"/>
</dbReference>
<dbReference type="SMR" id="C4L889"/>
<dbReference type="STRING" id="595494.Tola_2136"/>
<dbReference type="KEGG" id="tau:Tola_2136"/>
<dbReference type="eggNOG" id="COG0363">
    <property type="taxonomic scope" value="Bacteria"/>
</dbReference>
<dbReference type="HOGENOM" id="CLU_049611_0_1_6"/>
<dbReference type="OrthoDB" id="9791139at2"/>
<dbReference type="UniPathway" id="UPA00629">
    <property type="reaction ID" value="UER00684"/>
</dbReference>
<dbReference type="Proteomes" id="UP000009073">
    <property type="component" value="Chromosome"/>
</dbReference>
<dbReference type="GO" id="GO:0005737">
    <property type="term" value="C:cytoplasm"/>
    <property type="evidence" value="ECO:0007669"/>
    <property type="project" value="TreeGrafter"/>
</dbReference>
<dbReference type="GO" id="GO:0004342">
    <property type="term" value="F:glucosamine-6-phosphate deaminase activity"/>
    <property type="evidence" value="ECO:0007669"/>
    <property type="project" value="UniProtKB-UniRule"/>
</dbReference>
<dbReference type="GO" id="GO:0042802">
    <property type="term" value="F:identical protein binding"/>
    <property type="evidence" value="ECO:0007669"/>
    <property type="project" value="TreeGrafter"/>
</dbReference>
<dbReference type="GO" id="GO:0005975">
    <property type="term" value="P:carbohydrate metabolic process"/>
    <property type="evidence" value="ECO:0007669"/>
    <property type="project" value="InterPro"/>
</dbReference>
<dbReference type="GO" id="GO:0006043">
    <property type="term" value="P:glucosamine catabolic process"/>
    <property type="evidence" value="ECO:0007669"/>
    <property type="project" value="TreeGrafter"/>
</dbReference>
<dbReference type="GO" id="GO:0006046">
    <property type="term" value="P:N-acetylglucosamine catabolic process"/>
    <property type="evidence" value="ECO:0007669"/>
    <property type="project" value="TreeGrafter"/>
</dbReference>
<dbReference type="GO" id="GO:0019262">
    <property type="term" value="P:N-acetylneuraminate catabolic process"/>
    <property type="evidence" value="ECO:0007669"/>
    <property type="project" value="UniProtKB-UniRule"/>
</dbReference>
<dbReference type="CDD" id="cd01399">
    <property type="entry name" value="GlcN6P_deaminase"/>
    <property type="match status" value="1"/>
</dbReference>
<dbReference type="FunFam" id="3.40.50.1360:FF:000002">
    <property type="entry name" value="Glucosamine-6-phosphate deaminase"/>
    <property type="match status" value="1"/>
</dbReference>
<dbReference type="Gene3D" id="3.40.50.1360">
    <property type="match status" value="1"/>
</dbReference>
<dbReference type="HAMAP" id="MF_01241">
    <property type="entry name" value="GlcN6P_deamin"/>
    <property type="match status" value="1"/>
</dbReference>
<dbReference type="InterPro" id="IPR006148">
    <property type="entry name" value="Glc/Gal-6P_isomerase"/>
</dbReference>
<dbReference type="InterPro" id="IPR004547">
    <property type="entry name" value="Glucosamine6P_isomerase"/>
</dbReference>
<dbReference type="InterPro" id="IPR018321">
    <property type="entry name" value="Glucosamine6P_isomerase_CS"/>
</dbReference>
<dbReference type="InterPro" id="IPR037171">
    <property type="entry name" value="NagB/RpiA_transferase-like"/>
</dbReference>
<dbReference type="NCBIfam" id="TIGR00502">
    <property type="entry name" value="nagB"/>
    <property type="match status" value="1"/>
</dbReference>
<dbReference type="PANTHER" id="PTHR11280">
    <property type="entry name" value="GLUCOSAMINE-6-PHOSPHATE ISOMERASE"/>
    <property type="match status" value="1"/>
</dbReference>
<dbReference type="PANTHER" id="PTHR11280:SF5">
    <property type="entry name" value="GLUCOSAMINE-6-PHOSPHATE ISOMERASE"/>
    <property type="match status" value="1"/>
</dbReference>
<dbReference type="Pfam" id="PF01182">
    <property type="entry name" value="Glucosamine_iso"/>
    <property type="match status" value="1"/>
</dbReference>
<dbReference type="SUPFAM" id="SSF100950">
    <property type="entry name" value="NagB/RpiA/CoA transferase-like"/>
    <property type="match status" value="1"/>
</dbReference>
<dbReference type="PROSITE" id="PS01161">
    <property type="entry name" value="GLC_GALNAC_ISOMERASE"/>
    <property type="match status" value="1"/>
</dbReference>
<keyword id="KW-0021">Allosteric enzyme</keyword>
<keyword id="KW-0119">Carbohydrate metabolism</keyword>
<keyword id="KW-0378">Hydrolase</keyword>
<keyword id="KW-1185">Reference proteome</keyword>
<reference key="1">
    <citation type="submission" date="2009-05" db="EMBL/GenBank/DDBJ databases">
        <title>Complete sequence of Tolumonas auensis DSM 9187.</title>
        <authorList>
            <consortium name="US DOE Joint Genome Institute"/>
            <person name="Lucas S."/>
            <person name="Copeland A."/>
            <person name="Lapidus A."/>
            <person name="Glavina del Rio T."/>
            <person name="Tice H."/>
            <person name="Bruce D."/>
            <person name="Goodwin L."/>
            <person name="Pitluck S."/>
            <person name="Chertkov O."/>
            <person name="Brettin T."/>
            <person name="Detter J.C."/>
            <person name="Han C."/>
            <person name="Larimer F."/>
            <person name="Land M."/>
            <person name="Hauser L."/>
            <person name="Kyrpides N."/>
            <person name="Mikhailova N."/>
            <person name="Spring S."/>
            <person name="Beller H."/>
        </authorList>
    </citation>
    <scope>NUCLEOTIDE SEQUENCE [LARGE SCALE GENOMIC DNA]</scope>
    <source>
        <strain>DSM 9187 / NBRC 110442 / TA 4</strain>
    </source>
</reference>
<feature type="chain" id="PRO_1000214089" description="Glucosamine-6-phosphate deaminase">
    <location>
        <begin position="1"/>
        <end position="266"/>
    </location>
</feature>
<feature type="active site" description="Proton acceptor; for enolization step" evidence="1">
    <location>
        <position position="72"/>
    </location>
</feature>
<feature type="active site" description="For ring-opening step" evidence="1">
    <location>
        <position position="141"/>
    </location>
</feature>
<feature type="active site" description="Proton acceptor; for ring-opening step" evidence="1">
    <location>
        <position position="143"/>
    </location>
</feature>
<feature type="active site" description="For ring-opening step" evidence="1">
    <location>
        <position position="148"/>
    </location>
</feature>
<feature type="site" description="Part of the allosteric site" evidence="1">
    <location>
        <position position="151"/>
    </location>
</feature>
<feature type="site" description="Part of the allosteric site" evidence="1">
    <location>
        <position position="158"/>
    </location>
</feature>
<feature type="site" description="Part of the allosteric site" evidence="1">
    <location>
        <position position="160"/>
    </location>
</feature>
<feature type="site" description="Part of the allosteric site" evidence="1">
    <location>
        <position position="161"/>
    </location>
</feature>
<feature type="site" description="Part of the allosteric site" evidence="1">
    <location>
        <position position="254"/>
    </location>
</feature>
<sequence>MRMLPLKDKAQVGLWSARYIADRINQFAPTAERPFVLGLPTGGTPLTTYEQLIKLYQQGEVSFANVVTFNMDEYVGLSADHPQSYHRFMFDNFFNHIDIPRENINILDGTASDLLAECAAYEAKITTLGGIKLFFGGVGSDGHIAFNEPASSLRSRTRIKTLTQETLIDNARFFNNDINQVPKLALTVGVGTLMDAEEILILATGHNKALAVQAAIEGSVNHLWTVSALQLHPRGLIVCDEAATMELKVKTLRYFQQLEAPELAKY</sequence>
<name>NAGB_TOLAT</name>
<accession>C4L889</accession>
<protein>
    <recommendedName>
        <fullName evidence="1">Glucosamine-6-phosphate deaminase</fullName>
        <ecNumber evidence="1">3.5.99.6</ecNumber>
    </recommendedName>
    <alternativeName>
        <fullName evidence="1">GlcN6P deaminase</fullName>
        <shortName evidence="1">GNPDA</shortName>
    </alternativeName>
    <alternativeName>
        <fullName evidence="1">Glucosamine-6-phosphate isomerase</fullName>
    </alternativeName>
</protein>